<keyword id="KW-0479">Metal-binding</keyword>
<keyword id="KW-0687">Ribonucleoprotein</keyword>
<keyword id="KW-0689">Ribosomal protein</keyword>
<keyword id="KW-0862">Zinc</keyword>
<keyword id="KW-0863">Zinc-finger</keyword>
<comment type="cofactor">
    <cofactor evidence="1">
        <name>Zn(2+)</name>
        <dbReference type="ChEBI" id="CHEBI:29105"/>
    </cofactor>
    <text evidence="1">Binds 1 zinc ion per subunit.</text>
</comment>
<comment type="subunit">
    <text evidence="1">Part of the 30S ribosomal subunit.</text>
</comment>
<comment type="similarity">
    <text evidence="1">Belongs to the eukaryotic ribosomal protein eS31 family.</text>
</comment>
<name>RS27A_PICTO</name>
<proteinExistence type="inferred from homology"/>
<feature type="chain" id="PRO_0000137700" description="Small ribosomal subunit protein eS31">
    <location>
        <begin position="1"/>
        <end position="51"/>
    </location>
</feature>
<feature type="zinc finger region" description="C4-type" evidence="1">
    <location>
        <begin position="21"/>
        <end position="42"/>
    </location>
</feature>
<feature type="binding site" evidence="1">
    <location>
        <position position="21"/>
    </location>
    <ligand>
        <name>Zn(2+)</name>
        <dbReference type="ChEBI" id="CHEBI:29105"/>
    </ligand>
</feature>
<feature type="binding site" evidence="1">
    <location>
        <position position="24"/>
    </location>
    <ligand>
        <name>Zn(2+)</name>
        <dbReference type="ChEBI" id="CHEBI:29105"/>
    </ligand>
</feature>
<feature type="binding site" evidence="1">
    <location>
        <position position="39"/>
    </location>
    <ligand>
        <name>Zn(2+)</name>
        <dbReference type="ChEBI" id="CHEBI:29105"/>
    </ligand>
</feature>
<feature type="binding site" evidence="1">
    <location>
        <position position="42"/>
    </location>
    <ligand>
        <name>Zn(2+)</name>
        <dbReference type="ChEBI" id="CHEBI:29105"/>
    </ligand>
</feature>
<sequence>MEKRELYELKDNKIVRKRRFCPRCGPGVFLAEHEDRFSCGRCGYTEFKRKN</sequence>
<evidence type="ECO:0000255" key="1">
    <source>
        <dbReference type="HAMAP-Rule" id="MF_00777"/>
    </source>
</evidence>
<evidence type="ECO:0000305" key="2"/>
<accession>Q6L0P7</accession>
<reference key="1">
    <citation type="journal article" date="2004" name="Proc. Natl. Acad. Sci. U.S.A.">
        <title>Genome sequence of Picrophilus torridus and its implications for life around pH 0.</title>
        <authorList>
            <person name="Fuetterer O."/>
            <person name="Angelov A."/>
            <person name="Liesegang H."/>
            <person name="Gottschalk G."/>
            <person name="Schleper C."/>
            <person name="Schepers B."/>
            <person name="Dock C."/>
            <person name="Antranikian G."/>
            <person name="Liebl W."/>
        </authorList>
    </citation>
    <scope>NUCLEOTIDE SEQUENCE [LARGE SCALE GENOMIC DNA]</scope>
    <source>
        <strain>ATCC 700027 / DSM 9790 / JCM 10055 / NBRC 100828 / KAW 2/3</strain>
    </source>
</reference>
<dbReference type="EMBL" id="AE017261">
    <property type="protein sequence ID" value="AAT43455.1"/>
    <property type="molecule type" value="Genomic_DNA"/>
</dbReference>
<dbReference type="RefSeq" id="WP_011177671.1">
    <property type="nucleotide sequence ID" value="NC_005877.1"/>
</dbReference>
<dbReference type="SMR" id="Q6L0P7"/>
<dbReference type="FunCoup" id="Q6L0P7">
    <property type="interactions" value="52"/>
</dbReference>
<dbReference type="STRING" id="263820.PTO0870"/>
<dbReference type="PaxDb" id="263820-PTO0870"/>
<dbReference type="GeneID" id="2845377"/>
<dbReference type="KEGG" id="pto:PTO0870"/>
<dbReference type="PATRIC" id="fig|263820.9.peg.908"/>
<dbReference type="eggNOG" id="arCOG04183">
    <property type="taxonomic scope" value="Archaea"/>
</dbReference>
<dbReference type="HOGENOM" id="CLU_179743_2_0_2"/>
<dbReference type="InParanoid" id="Q6L0P7"/>
<dbReference type="OrthoDB" id="25142at2157"/>
<dbReference type="Proteomes" id="UP000000438">
    <property type="component" value="Chromosome"/>
</dbReference>
<dbReference type="GO" id="GO:1990904">
    <property type="term" value="C:ribonucleoprotein complex"/>
    <property type="evidence" value="ECO:0007669"/>
    <property type="project" value="UniProtKB-KW"/>
</dbReference>
<dbReference type="GO" id="GO:0005840">
    <property type="term" value="C:ribosome"/>
    <property type="evidence" value="ECO:0007669"/>
    <property type="project" value="UniProtKB-KW"/>
</dbReference>
<dbReference type="GO" id="GO:0003735">
    <property type="term" value="F:structural constituent of ribosome"/>
    <property type="evidence" value="ECO:0007669"/>
    <property type="project" value="InterPro"/>
</dbReference>
<dbReference type="GO" id="GO:0008270">
    <property type="term" value="F:zinc ion binding"/>
    <property type="evidence" value="ECO:0007669"/>
    <property type="project" value="UniProtKB-UniRule"/>
</dbReference>
<dbReference type="GO" id="GO:0006412">
    <property type="term" value="P:translation"/>
    <property type="evidence" value="ECO:0007669"/>
    <property type="project" value="UniProtKB-UniRule"/>
</dbReference>
<dbReference type="Gene3D" id="6.20.50.180">
    <property type="match status" value="1"/>
</dbReference>
<dbReference type="HAMAP" id="MF_00777">
    <property type="entry name" value="Ribosomal_eS31"/>
    <property type="match status" value="1"/>
</dbReference>
<dbReference type="InterPro" id="IPR002906">
    <property type="entry name" value="Ribosomal_eS31"/>
</dbReference>
<dbReference type="InterPro" id="IPR022845">
    <property type="entry name" value="Ribosomal_eS31_arc"/>
</dbReference>
<dbReference type="InterPro" id="IPR011332">
    <property type="entry name" value="Ribosomal_zn-bd"/>
</dbReference>
<dbReference type="NCBIfam" id="NF001669">
    <property type="entry name" value="PRK00432.1"/>
    <property type="match status" value="1"/>
</dbReference>
<dbReference type="Pfam" id="PF01599">
    <property type="entry name" value="Ribosomal_S27"/>
    <property type="match status" value="1"/>
</dbReference>
<dbReference type="SMART" id="SM01402">
    <property type="entry name" value="Ribosomal_S27"/>
    <property type="match status" value="1"/>
</dbReference>
<dbReference type="SUPFAM" id="SSF57829">
    <property type="entry name" value="Zn-binding ribosomal proteins"/>
    <property type="match status" value="1"/>
</dbReference>
<organism>
    <name type="scientific">Picrophilus torridus (strain ATCC 700027 / DSM 9790 / JCM 10055 / NBRC 100828 / KAW 2/3)</name>
    <dbReference type="NCBI Taxonomy" id="1122961"/>
    <lineage>
        <taxon>Archaea</taxon>
        <taxon>Methanobacteriati</taxon>
        <taxon>Thermoplasmatota</taxon>
        <taxon>Thermoplasmata</taxon>
        <taxon>Thermoplasmatales</taxon>
        <taxon>Picrophilaceae</taxon>
        <taxon>Picrophilus</taxon>
    </lineage>
</organism>
<protein>
    <recommendedName>
        <fullName evidence="1">Small ribosomal subunit protein eS31</fullName>
    </recommendedName>
    <alternativeName>
        <fullName evidence="2">30S ribosomal protein S27ae</fullName>
    </alternativeName>
</protein>
<gene>
    <name evidence="1" type="primary">rps27ae</name>
    <name type="ordered locus">PTO0870</name>
</gene>